<name>F16PA_BRUO2</name>
<comment type="catalytic activity">
    <reaction evidence="1">
        <text>beta-D-fructose 1,6-bisphosphate + H2O = beta-D-fructose 6-phosphate + phosphate</text>
        <dbReference type="Rhea" id="RHEA:11064"/>
        <dbReference type="ChEBI" id="CHEBI:15377"/>
        <dbReference type="ChEBI" id="CHEBI:32966"/>
        <dbReference type="ChEBI" id="CHEBI:43474"/>
        <dbReference type="ChEBI" id="CHEBI:57634"/>
        <dbReference type="EC" id="3.1.3.11"/>
    </reaction>
</comment>
<comment type="cofactor">
    <cofactor evidence="1">
        <name>Mg(2+)</name>
        <dbReference type="ChEBI" id="CHEBI:18420"/>
    </cofactor>
    <text evidence="1">Binds 2 magnesium ions per subunit.</text>
</comment>
<comment type="pathway">
    <text evidence="1">Carbohydrate biosynthesis; gluconeogenesis.</text>
</comment>
<comment type="subunit">
    <text evidence="1">Homotetramer.</text>
</comment>
<comment type="subcellular location">
    <subcellularLocation>
        <location evidence="1">Cytoplasm</location>
    </subcellularLocation>
</comment>
<comment type="similarity">
    <text evidence="1">Belongs to the FBPase class 1 family.</text>
</comment>
<gene>
    <name evidence="1" type="primary">fbp</name>
    <name type="ordered locus">BOV_A0819</name>
</gene>
<protein>
    <recommendedName>
        <fullName evidence="1">Fructose-1,6-bisphosphatase class 1</fullName>
        <shortName evidence="1">FBPase class 1</shortName>
        <ecNumber evidence="1">3.1.3.11</ecNumber>
    </recommendedName>
    <alternativeName>
        <fullName evidence="1">D-fructose-1,6-bisphosphate 1-phosphohydrolase class 1</fullName>
    </alternativeName>
</protein>
<sequence>MTLVGNFSPLVLVGDSDRVEAETVGAYLDGWAGHDKVRLATANAIKAILSGAGRLVGRIARGYLPGDPGKLVGVNSDQDQQKSIDVGSHNLFVELLIAAGVASILSEEADLPVAGKADGLVAVAIDPLDGSGNVGLGAPLGTIFSIFPADVEEPFLQPGNRQIAAGYVSYGNSVDLGFSVGEGVIFATLDPVSGQFHITRRNVKLPERTSDLAFNASVQRHLSAGMQAYVNDAFLGKDGPRGRNFNMRWLGAAVGDMHRIMQRGGLFFYVNDSRPGYEKGRLRLVYEANPIAFLAREAGSKATDGSRPILDIVPQTYHERSALVFGVAEEVDILGEYFVK</sequence>
<reference key="1">
    <citation type="journal article" date="2009" name="PLoS ONE">
        <title>Genome degradation in Brucella ovis corresponds with narrowing of its host range and tissue tropism.</title>
        <authorList>
            <person name="Tsolis R.M."/>
            <person name="Seshadri R."/>
            <person name="Santos R.L."/>
            <person name="Sangari F.J."/>
            <person name="Lobo J.M."/>
            <person name="de Jong M.F."/>
            <person name="Ren Q."/>
            <person name="Myers G."/>
            <person name="Brinkac L.M."/>
            <person name="Nelson W.C."/>
            <person name="Deboy R.T."/>
            <person name="Angiuoli S."/>
            <person name="Khouri H."/>
            <person name="Dimitrov G."/>
            <person name="Robinson J.R."/>
            <person name="Mulligan S."/>
            <person name="Walker R.L."/>
            <person name="Elzer P.E."/>
            <person name="Hassan K.A."/>
            <person name="Paulsen I.T."/>
        </authorList>
    </citation>
    <scope>NUCLEOTIDE SEQUENCE [LARGE SCALE GENOMIC DNA]</scope>
    <source>
        <strain>ATCC 25840 / 63/290 / NCTC 10512</strain>
    </source>
</reference>
<evidence type="ECO:0000255" key="1">
    <source>
        <dbReference type="HAMAP-Rule" id="MF_01855"/>
    </source>
</evidence>
<keyword id="KW-0119">Carbohydrate metabolism</keyword>
<keyword id="KW-0963">Cytoplasm</keyword>
<keyword id="KW-0378">Hydrolase</keyword>
<keyword id="KW-0460">Magnesium</keyword>
<keyword id="KW-0479">Metal-binding</keyword>
<feature type="chain" id="PRO_0000364481" description="Fructose-1,6-bisphosphatase class 1">
    <location>
        <begin position="1"/>
        <end position="340"/>
    </location>
</feature>
<feature type="binding site" evidence="1">
    <location>
        <position position="107"/>
    </location>
    <ligand>
        <name>Mg(2+)</name>
        <dbReference type="ChEBI" id="CHEBI:18420"/>
        <label>1</label>
    </ligand>
</feature>
<feature type="binding site" evidence="1">
    <location>
        <position position="126"/>
    </location>
    <ligand>
        <name>Mg(2+)</name>
        <dbReference type="ChEBI" id="CHEBI:18420"/>
        <label>1</label>
    </ligand>
</feature>
<feature type="binding site" evidence="1">
    <location>
        <position position="126"/>
    </location>
    <ligand>
        <name>Mg(2+)</name>
        <dbReference type="ChEBI" id="CHEBI:18420"/>
        <label>2</label>
    </ligand>
</feature>
<feature type="binding site" evidence="1">
    <location>
        <position position="128"/>
    </location>
    <ligand>
        <name>Mg(2+)</name>
        <dbReference type="ChEBI" id="CHEBI:18420"/>
        <label>1</label>
    </ligand>
</feature>
<feature type="binding site" evidence="1">
    <location>
        <position position="129"/>
    </location>
    <ligand>
        <name>Mg(2+)</name>
        <dbReference type="ChEBI" id="CHEBI:18420"/>
        <label>2</label>
    </ligand>
</feature>
<feature type="binding site" evidence="1">
    <location>
        <position position="215"/>
    </location>
    <ligand>
        <name>substrate</name>
    </ligand>
</feature>
<feature type="binding site" evidence="1">
    <location>
        <position position="287"/>
    </location>
    <ligand>
        <name>Mg(2+)</name>
        <dbReference type="ChEBI" id="CHEBI:18420"/>
        <label>2</label>
    </ligand>
</feature>
<organism>
    <name type="scientific">Brucella ovis (strain ATCC 25840 / 63/290 / NCTC 10512)</name>
    <dbReference type="NCBI Taxonomy" id="444178"/>
    <lineage>
        <taxon>Bacteria</taxon>
        <taxon>Pseudomonadati</taxon>
        <taxon>Pseudomonadota</taxon>
        <taxon>Alphaproteobacteria</taxon>
        <taxon>Hyphomicrobiales</taxon>
        <taxon>Brucellaceae</taxon>
        <taxon>Brucella/Ochrobactrum group</taxon>
        <taxon>Brucella</taxon>
    </lineage>
</organism>
<proteinExistence type="inferred from homology"/>
<accession>A5VVE8</accession>
<dbReference type="EC" id="3.1.3.11" evidence="1"/>
<dbReference type="EMBL" id="CP000709">
    <property type="protein sequence ID" value="ABQ62795.1"/>
    <property type="molecule type" value="Genomic_DNA"/>
</dbReference>
<dbReference type="RefSeq" id="WP_006016411.1">
    <property type="nucleotide sequence ID" value="NC_009504.1"/>
</dbReference>
<dbReference type="SMR" id="A5VVE8"/>
<dbReference type="GeneID" id="45126188"/>
<dbReference type="KEGG" id="bov:BOV_A0819"/>
<dbReference type="HOGENOM" id="CLU_039977_0_0_5"/>
<dbReference type="PhylomeDB" id="A5VVE8"/>
<dbReference type="UniPathway" id="UPA00138"/>
<dbReference type="Proteomes" id="UP000006383">
    <property type="component" value="Chromosome II"/>
</dbReference>
<dbReference type="GO" id="GO:0005829">
    <property type="term" value="C:cytosol"/>
    <property type="evidence" value="ECO:0007669"/>
    <property type="project" value="TreeGrafter"/>
</dbReference>
<dbReference type="GO" id="GO:0042132">
    <property type="term" value="F:fructose 1,6-bisphosphate 1-phosphatase activity"/>
    <property type="evidence" value="ECO:0007669"/>
    <property type="project" value="UniProtKB-UniRule"/>
</dbReference>
<dbReference type="GO" id="GO:0000287">
    <property type="term" value="F:magnesium ion binding"/>
    <property type="evidence" value="ECO:0007669"/>
    <property type="project" value="UniProtKB-UniRule"/>
</dbReference>
<dbReference type="GO" id="GO:0030388">
    <property type="term" value="P:fructose 1,6-bisphosphate metabolic process"/>
    <property type="evidence" value="ECO:0007669"/>
    <property type="project" value="TreeGrafter"/>
</dbReference>
<dbReference type="GO" id="GO:0006002">
    <property type="term" value="P:fructose 6-phosphate metabolic process"/>
    <property type="evidence" value="ECO:0007669"/>
    <property type="project" value="TreeGrafter"/>
</dbReference>
<dbReference type="GO" id="GO:0006000">
    <property type="term" value="P:fructose metabolic process"/>
    <property type="evidence" value="ECO:0007669"/>
    <property type="project" value="TreeGrafter"/>
</dbReference>
<dbReference type="GO" id="GO:0006094">
    <property type="term" value="P:gluconeogenesis"/>
    <property type="evidence" value="ECO:0007669"/>
    <property type="project" value="UniProtKB-UniRule"/>
</dbReference>
<dbReference type="GO" id="GO:0005986">
    <property type="term" value="P:sucrose biosynthetic process"/>
    <property type="evidence" value="ECO:0007669"/>
    <property type="project" value="TreeGrafter"/>
</dbReference>
<dbReference type="CDD" id="cd00354">
    <property type="entry name" value="FBPase"/>
    <property type="match status" value="1"/>
</dbReference>
<dbReference type="Gene3D" id="3.40.190.80">
    <property type="match status" value="1"/>
</dbReference>
<dbReference type="Gene3D" id="3.30.540.10">
    <property type="entry name" value="Fructose-1,6-Bisphosphatase, subunit A, domain 1"/>
    <property type="match status" value="1"/>
</dbReference>
<dbReference type="HAMAP" id="MF_01855">
    <property type="entry name" value="FBPase_class1"/>
    <property type="match status" value="1"/>
</dbReference>
<dbReference type="InterPro" id="IPR044015">
    <property type="entry name" value="FBPase_C_dom"/>
</dbReference>
<dbReference type="InterPro" id="IPR000146">
    <property type="entry name" value="FBPase_class-1"/>
</dbReference>
<dbReference type="InterPro" id="IPR033391">
    <property type="entry name" value="FBPase_N"/>
</dbReference>
<dbReference type="InterPro" id="IPR028343">
    <property type="entry name" value="FBPtase"/>
</dbReference>
<dbReference type="InterPro" id="IPR020548">
    <property type="entry name" value="Fructose_bisphosphatase_AS"/>
</dbReference>
<dbReference type="NCBIfam" id="NF006780">
    <property type="entry name" value="PRK09293.1-4"/>
    <property type="match status" value="1"/>
</dbReference>
<dbReference type="PANTHER" id="PTHR11556">
    <property type="entry name" value="FRUCTOSE-1,6-BISPHOSPHATASE-RELATED"/>
    <property type="match status" value="1"/>
</dbReference>
<dbReference type="PANTHER" id="PTHR11556:SF35">
    <property type="entry name" value="SEDOHEPTULOSE-1,7-BISPHOSPHATASE, CHLOROPLASTIC"/>
    <property type="match status" value="1"/>
</dbReference>
<dbReference type="Pfam" id="PF00316">
    <property type="entry name" value="FBPase"/>
    <property type="match status" value="1"/>
</dbReference>
<dbReference type="Pfam" id="PF18913">
    <property type="entry name" value="FBPase_C"/>
    <property type="match status" value="1"/>
</dbReference>
<dbReference type="PIRSF" id="PIRSF500210">
    <property type="entry name" value="FBPtase"/>
    <property type="match status" value="1"/>
</dbReference>
<dbReference type="PIRSF" id="PIRSF000904">
    <property type="entry name" value="FBPtase_SBPase"/>
    <property type="match status" value="1"/>
</dbReference>
<dbReference type="PRINTS" id="PR00115">
    <property type="entry name" value="F16BPHPHTASE"/>
</dbReference>
<dbReference type="SUPFAM" id="SSF56655">
    <property type="entry name" value="Carbohydrate phosphatase"/>
    <property type="match status" value="1"/>
</dbReference>
<dbReference type="PROSITE" id="PS00124">
    <property type="entry name" value="FBPASE"/>
    <property type="match status" value="1"/>
</dbReference>